<feature type="chain" id="PRO_0000363662" description="Probable serine acetyltransferase 5">
    <location>
        <begin position="1"/>
        <end position="340"/>
    </location>
</feature>
<feature type="region of interest" description="Disordered" evidence="2">
    <location>
        <begin position="1"/>
        <end position="67"/>
    </location>
</feature>
<feature type="compositionally biased region" description="Low complexity" evidence="2">
    <location>
        <begin position="1"/>
        <end position="17"/>
    </location>
</feature>
<feature type="compositionally biased region" description="Low complexity" evidence="2">
    <location>
        <begin position="54"/>
        <end position="64"/>
    </location>
</feature>
<gene>
    <name type="primary">SAT5</name>
    <name type="ordered locus">Os05g0533500</name>
    <name type="ordered locus">LOC_Os05g45710</name>
</gene>
<sequence>MLVVVARKSSSSARVAAHQTRSHRAAMPAGQPHAHEPDGGGASHRRPQSPPSLPAEVVPAFAPPESEDEESWVWSQIKAEARRDADAEPALASFLYATVLSHPSLPRSISFHLANKLCSSTLLSTLLYDLFLASFTAHPSLRAAVVADLLAARSRDPACVGFSQCLLNFKGFLAIQAHRVSHVLWAQQRRPLALALQSRVADVFAVDIHPAAVVGKGILLDHATGVVIGETAVVGDNVSILHHVTLGGTGKAVGDRHPKIGDGVLIGAGATILGNVKIGAGAKIGAGSVVLIDVPARNTAVGNPARLIGRKNGEVEKDEDMPGESMDHTSFIRQWSDYTI</sequence>
<evidence type="ECO:0000250" key="1"/>
<evidence type="ECO:0000256" key="2">
    <source>
        <dbReference type="SAM" id="MobiDB-lite"/>
    </source>
</evidence>
<evidence type="ECO:0000305" key="3"/>
<dbReference type="EC" id="2.3.1.30"/>
<dbReference type="EMBL" id="AP008211">
    <property type="protein sequence ID" value="BAF18055.1"/>
    <property type="status" value="ALT_INIT"/>
    <property type="molecule type" value="Genomic_DNA"/>
</dbReference>
<dbReference type="EMBL" id="AP014961">
    <property type="status" value="NOT_ANNOTATED_CDS"/>
    <property type="molecule type" value="Genomic_DNA"/>
</dbReference>
<dbReference type="EMBL" id="AK241333">
    <property type="status" value="NOT_ANNOTATED_CDS"/>
    <property type="molecule type" value="mRNA"/>
</dbReference>
<dbReference type="RefSeq" id="XP_015639006.1">
    <property type="nucleotide sequence ID" value="XM_015783520.1"/>
</dbReference>
<dbReference type="SMR" id="Q0DGG8"/>
<dbReference type="FunCoup" id="Q0DGG8">
    <property type="interactions" value="495"/>
</dbReference>
<dbReference type="STRING" id="39947.Q0DGG8"/>
<dbReference type="PaxDb" id="39947-Q0DGG8"/>
<dbReference type="KEGG" id="dosa:Os05g0533500"/>
<dbReference type="eggNOG" id="KOG4750">
    <property type="taxonomic scope" value="Eukaryota"/>
</dbReference>
<dbReference type="HOGENOM" id="CLU_051638_0_1_1"/>
<dbReference type="InParanoid" id="Q0DGG8"/>
<dbReference type="OrthoDB" id="25818at2759"/>
<dbReference type="PlantReactome" id="R-OSA-1119331">
    <property type="pathway name" value="Cysteine biosynthesis I"/>
</dbReference>
<dbReference type="UniPathway" id="UPA00136">
    <property type="reaction ID" value="UER00199"/>
</dbReference>
<dbReference type="Proteomes" id="UP000000763">
    <property type="component" value="Chromosome 5"/>
</dbReference>
<dbReference type="Proteomes" id="UP000059680">
    <property type="component" value="Chromosome 5"/>
</dbReference>
<dbReference type="GO" id="GO:0005829">
    <property type="term" value="C:cytosol"/>
    <property type="evidence" value="ECO:0000318"/>
    <property type="project" value="GO_Central"/>
</dbReference>
<dbReference type="GO" id="GO:0009001">
    <property type="term" value="F:serine O-acetyltransferase activity"/>
    <property type="evidence" value="ECO:0000318"/>
    <property type="project" value="GO_Central"/>
</dbReference>
<dbReference type="GO" id="GO:0006535">
    <property type="term" value="P:cysteine biosynthetic process from serine"/>
    <property type="evidence" value="ECO:0007669"/>
    <property type="project" value="InterPro"/>
</dbReference>
<dbReference type="CDD" id="cd03354">
    <property type="entry name" value="LbH_SAT"/>
    <property type="match status" value="1"/>
</dbReference>
<dbReference type="FunFam" id="2.160.10.10:FF:000002">
    <property type="entry name" value="Serine acetyltransferase"/>
    <property type="match status" value="1"/>
</dbReference>
<dbReference type="FunFam" id="1.10.3130.10:FF:000004">
    <property type="entry name" value="Serine acetyltransferase 5"/>
    <property type="match status" value="1"/>
</dbReference>
<dbReference type="Gene3D" id="2.160.10.10">
    <property type="entry name" value="Hexapeptide repeat proteins"/>
    <property type="match status" value="1"/>
</dbReference>
<dbReference type="Gene3D" id="1.10.3130.10">
    <property type="entry name" value="serine acetyltransferase, domain 1"/>
    <property type="match status" value="1"/>
</dbReference>
<dbReference type="InterPro" id="IPR001451">
    <property type="entry name" value="Hexapep"/>
</dbReference>
<dbReference type="InterPro" id="IPR018357">
    <property type="entry name" value="Hexapep_transf_CS"/>
</dbReference>
<dbReference type="InterPro" id="IPR045304">
    <property type="entry name" value="LbH_SAT"/>
</dbReference>
<dbReference type="InterPro" id="IPR010493">
    <property type="entry name" value="Ser_AcTrfase_N"/>
</dbReference>
<dbReference type="InterPro" id="IPR042122">
    <property type="entry name" value="Ser_AcTrfase_N_sf"/>
</dbReference>
<dbReference type="InterPro" id="IPR053376">
    <property type="entry name" value="Serine_acetyltransferase"/>
</dbReference>
<dbReference type="InterPro" id="IPR011004">
    <property type="entry name" value="Trimer_LpxA-like_sf"/>
</dbReference>
<dbReference type="NCBIfam" id="NF041874">
    <property type="entry name" value="EPS_EpsC"/>
    <property type="match status" value="1"/>
</dbReference>
<dbReference type="PANTHER" id="PTHR42811">
    <property type="entry name" value="SERINE ACETYLTRANSFERASE"/>
    <property type="match status" value="1"/>
</dbReference>
<dbReference type="Pfam" id="PF00132">
    <property type="entry name" value="Hexapep"/>
    <property type="match status" value="1"/>
</dbReference>
<dbReference type="Pfam" id="PF06426">
    <property type="entry name" value="SATase_N"/>
    <property type="match status" value="1"/>
</dbReference>
<dbReference type="SMART" id="SM00971">
    <property type="entry name" value="SATase_N"/>
    <property type="match status" value="1"/>
</dbReference>
<dbReference type="SUPFAM" id="SSF51161">
    <property type="entry name" value="Trimeric LpxA-like enzymes"/>
    <property type="match status" value="1"/>
</dbReference>
<dbReference type="PROSITE" id="PS00101">
    <property type="entry name" value="HEXAPEP_TRANSFERASES"/>
    <property type="match status" value="1"/>
</dbReference>
<keyword id="KW-0012">Acyltransferase</keyword>
<keyword id="KW-0028">Amino-acid biosynthesis</keyword>
<keyword id="KW-1185">Reference proteome</keyword>
<keyword id="KW-0808">Transferase</keyword>
<protein>
    <recommendedName>
        <fullName>Probable serine acetyltransferase 5</fullName>
        <ecNumber>2.3.1.30</ecNumber>
    </recommendedName>
    <alternativeName>
        <fullName>OsSERAT1;2</fullName>
    </alternativeName>
</protein>
<reference key="1">
    <citation type="journal article" date="2005" name="Nature">
        <title>The map-based sequence of the rice genome.</title>
        <authorList>
            <consortium name="International rice genome sequencing project (IRGSP)"/>
        </authorList>
    </citation>
    <scope>NUCLEOTIDE SEQUENCE [LARGE SCALE GENOMIC DNA]</scope>
    <source>
        <strain>cv. Nipponbare</strain>
    </source>
</reference>
<reference key="2">
    <citation type="journal article" date="2008" name="Nucleic Acids Res.">
        <title>The rice annotation project database (RAP-DB): 2008 update.</title>
        <authorList>
            <consortium name="The rice annotation project (RAP)"/>
        </authorList>
    </citation>
    <scope>GENOME REANNOTATION</scope>
    <source>
        <strain>cv. Nipponbare</strain>
    </source>
</reference>
<reference key="3">
    <citation type="journal article" date="2013" name="Rice">
        <title>Improvement of the Oryza sativa Nipponbare reference genome using next generation sequence and optical map data.</title>
        <authorList>
            <person name="Kawahara Y."/>
            <person name="de la Bastide M."/>
            <person name="Hamilton J.P."/>
            <person name="Kanamori H."/>
            <person name="McCombie W.R."/>
            <person name="Ouyang S."/>
            <person name="Schwartz D.C."/>
            <person name="Tanaka T."/>
            <person name="Wu J."/>
            <person name="Zhou S."/>
            <person name="Childs K.L."/>
            <person name="Davidson R.M."/>
            <person name="Lin H."/>
            <person name="Quesada-Ocampo L."/>
            <person name="Vaillancourt B."/>
            <person name="Sakai H."/>
            <person name="Lee S.S."/>
            <person name="Kim J."/>
            <person name="Numa H."/>
            <person name="Itoh T."/>
            <person name="Buell C.R."/>
            <person name="Matsumoto T."/>
        </authorList>
    </citation>
    <scope>GENOME REANNOTATION</scope>
    <source>
        <strain>cv. Nipponbare</strain>
    </source>
</reference>
<reference key="4">
    <citation type="submission" date="2006-10" db="EMBL/GenBank/DDBJ databases">
        <title>Oryza sativa full length cDNA.</title>
        <authorList>
            <consortium name="The rice full-length cDNA consortium"/>
        </authorList>
    </citation>
    <scope>NUCLEOTIDE SEQUENCE [LARGE SCALE MRNA]</scope>
    <source>
        <strain>cv. Nipponbare</strain>
    </source>
</reference>
<comment type="catalytic activity">
    <reaction>
        <text>L-serine + acetyl-CoA = O-acetyl-L-serine + CoA</text>
        <dbReference type="Rhea" id="RHEA:24560"/>
        <dbReference type="ChEBI" id="CHEBI:33384"/>
        <dbReference type="ChEBI" id="CHEBI:57287"/>
        <dbReference type="ChEBI" id="CHEBI:57288"/>
        <dbReference type="ChEBI" id="CHEBI:58340"/>
        <dbReference type="EC" id="2.3.1.30"/>
    </reaction>
</comment>
<comment type="pathway">
    <text>Amino-acid biosynthesis; L-cysteine biosynthesis; L-cysteine from L-serine: step 1/2.</text>
</comment>
<comment type="subunit">
    <text evidence="1">Homomultimer.</text>
</comment>
<comment type="similarity">
    <text evidence="3">Belongs to the transferase hexapeptide repeat family.</text>
</comment>
<comment type="sequence caution" evidence="3">
    <conflict type="erroneous initiation">
        <sequence resource="EMBL-CDS" id="BAF18055"/>
    </conflict>
    <text>Truncated N-terminus.</text>
</comment>
<organism>
    <name type="scientific">Oryza sativa subsp. japonica</name>
    <name type="common">Rice</name>
    <dbReference type="NCBI Taxonomy" id="39947"/>
    <lineage>
        <taxon>Eukaryota</taxon>
        <taxon>Viridiplantae</taxon>
        <taxon>Streptophyta</taxon>
        <taxon>Embryophyta</taxon>
        <taxon>Tracheophyta</taxon>
        <taxon>Spermatophyta</taxon>
        <taxon>Magnoliopsida</taxon>
        <taxon>Liliopsida</taxon>
        <taxon>Poales</taxon>
        <taxon>Poaceae</taxon>
        <taxon>BOP clade</taxon>
        <taxon>Oryzoideae</taxon>
        <taxon>Oryzeae</taxon>
        <taxon>Oryzinae</taxon>
        <taxon>Oryza</taxon>
        <taxon>Oryza sativa</taxon>
    </lineage>
</organism>
<accession>Q0DGG8</accession>
<name>SAT5_ORYSJ</name>
<proteinExistence type="evidence at transcript level"/>